<feature type="chain" id="PRO_1000091208" description="D-alanine--D-alanine ligase">
    <location>
        <begin position="1"/>
        <end position="391"/>
    </location>
</feature>
<feature type="domain" description="ATP-grasp" evidence="2">
    <location>
        <begin position="171"/>
        <end position="381"/>
    </location>
</feature>
<feature type="region of interest" description="Disordered" evidence="3">
    <location>
        <begin position="1"/>
        <end position="24"/>
    </location>
</feature>
<feature type="binding site" evidence="2">
    <location>
        <begin position="207"/>
        <end position="262"/>
    </location>
    <ligand>
        <name>ATP</name>
        <dbReference type="ChEBI" id="CHEBI:30616"/>
    </ligand>
</feature>
<feature type="binding site" evidence="2">
    <location>
        <position position="335"/>
    </location>
    <ligand>
        <name>Mg(2+)</name>
        <dbReference type="ChEBI" id="CHEBI:18420"/>
        <label>1</label>
    </ligand>
</feature>
<feature type="binding site" evidence="2">
    <location>
        <position position="348"/>
    </location>
    <ligand>
        <name>Mg(2+)</name>
        <dbReference type="ChEBI" id="CHEBI:18420"/>
        <label>1</label>
    </ligand>
</feature>
<feature type="binding site" evidence="2">
    <location>
        <position position="348"/>
    </location>
    <ligand>
        <name>Mg(2+)</name>
        <dbReference type="ChEBI" id="CHEBI:18420"/>
        <label>2</label>
    </ligand>
</feature>
<feature type="binding site" evidence="2">
    <location>
        <position position="350"/>
    </location>
    <ligand>
        <name>Mg(2+)</name>
        <dbReference type="ChEBI" id="CHEBI:18420"/>
        <label>2</label>
    </ligand>
</feature>
<name>DDL_STRGG</name>
<reference key="1">
    <citation type="journal article" date="2008" name="J. Bacteriol.">
        <title>Genome sequence of the streptomycin-producing microorganism Streptomyces griseus IFO 13350.</title>
        <authorList>
            <person name="Ohnishi Y."/>
            <person name="Ishikawa J."/>
            <person name="Hara H."/>
            <person name="Suzuki H."/>
            <person name="Ikenoya M."/>
            <person name="Ikeda H."/>
            <person name="Yamashita A."/>
            <person name="Hattori M."/>
            <person name="Horinouchi S."/>
        </authorList>
    </citation>
    <scope>NUCLEOTIDE SEQUENCE [LARGE SCALE GENOMIC DNA]</scope>
    <source>
        <strain>JCM 4626 / CBS 651.72 / NBRC 13350 / KCC S-0626 / ISP 5235</strain>
    </source>
</reference>
<organism>
    <name type="scientific">Streptomyces griseus subsp. griseus (strain JCM 4626 / CBS 651.72 / NBRC 13350 / KCC S-0626 / ISP 5235)</name>
    <dbReference type="NCBI Taxonomy" id="455632"/>
    <lineage>
        <taxon>Bacteria</taxon>
        <taxon>Bacillati</taxon>
        <taxon>Actinomycetota</taxon>
        <taxon>Actinomycetes</taxon>
        <taxon>Kitasatosporales</taxon>
        <taxon>Streptomycetaceae</taxon>
        <taxon>Streptomyces</taxon>
    </lineage>
</organism>
<keyword id="KW-0067">ATP-binding</keyword>
<keyword id="KW-0133">Cell shape</keyword>
<keyword id="KW-0961">Cell wall biogenesis/degradation</keyword>
<keyword id="KW-0963">Cytoplasm</keyword>
<keyword id="KW-0436">Ligase</keyword>
<keyword id="KW-0460">Magnesium</keyword>
<keyword id="KW-0464">Manganese</keyword>
<keyword id="KW-0479">Metal-binding</keyword>
<keyword id="KW-0547">Nucleotide-binding</keyword>
<keyword id="KW-0573">Peptidoglycan synthesis</keyword>
<sequence>MSSENLPQSPERAESPQAPRRKPRVAVVFGGRSSEHGISVVTAGAVMRAIDRTTYDVLPIGITTDGRWALTADEPERMAITDRKVPDVDRLTESAEGSVVLSVDPGSREVVYTEPGSVPKALGEVDVVFPVLHGPYGEDGTLQGLLELSGVPYVGAGVLASAVGQDKEYMKRVFLSFGLPVGPYEVVRPREWDNDPAAARERIVDFAGEHGWPLFIKPARGGSSMGITKVDSVEGLDAAIEEARRHDPKFLVESLLRGREIECGVLEFEDGPRASVPAEIPPVTSHDFYDFEAKYIDSAAGLVPAPLTEEQTAEVRRLAVAAFDAVSCEGLVRADFFLTEDGTFVINEINTLPGFTPISMYPRMWQESGVDYPELVDRLIQAALSRSTGLR</sequence>
<proteinExistence type="inferred from homology"/>
<accession>B1VYZ5</accession>
<gene>
    <name evidence="2" type="primary">ddl</name>
    <name type="ordered locus">SGR_1921</name>
</gene>
<protein>
    <recommendedName>
        <fullName evidence="2">D-alanine--D-alanine ligase</fullName>
        <ecNumber evidence="2">6.3.2.4</ecNumber>
    </recommendedName>
    <alternativeName>
        <fullName evidence="2">D-Ala-D-Ala ligase</fullName>
    </alternativeName>
    <alternativeName>
        <fullName evidence="2">D-alanylalanine synthetase</fullName>
    </alternativeName>
</protein>
<comment type="function">
    <text evidence="2">Cell wall formation.</text>
</comment>
<comment type="catalytic activity">
    <reaction evidence="2">
        <text>2 D-alanine + ATP = D-alanyl-D-alanine + ADP + phosphate + H(+)</text>
        <dbReference type="Rhea" id="RHEA:11224"/>
        <dbReference type="ChEBI" id="CHEBI:15378"/>
        <dbReference type="ChEBI" id="CHEBI:30616"/>
        <dbReference type="ChEBI" id="CHEBI:43474"/>
        <dbReference type="ChEBI" id="CHEBI:57416"/>
        <dbReference type="ChEBI" id="CHEBI:57822"/>
        <dbReference type="ChEBI" id="CHEBI:456216"/>
        <dbReference type="EC" id="6.3.2.4"/>
    </reaction>
</comment>
<comment type="cofactor">
    <cofactor evidence="1">
        <name>Mg(2+)</name>
        <dbReference type="ChEBI" id="CHEBI:18420"/>
    </cofactor>
    <cofactor evidence="1">
        <name>Mn(2+)</name>
        <dbReference type="ChEBI" id="CHEBI:29035"/>
    </cofactor>
    <text evidence="1">Binds 2 magnesium or manganese ions per subunit.</text>
</comment>
<comment type="pathway">
    <text evidence="2">Cell wall biogenesis; peptidoglycan biosynthesis.</text>
</comment>
<comment type="subcellular location">
    <subcellularLocation>
        <location evidence="2">Cytoplasm</location>
    </subcellularLocation>
</comment>
<comment type="similarity">
    <text evidence="2">Belongs to the D-alanine--D-alanine ligase family.</text>
</comment>
<evidence type="ECO:0000250" key="1"/>
<evidence type="ECO:0000255" key="2">
    <source>
        <dbReference type="HAMAP-Rule" id="MF_00047"/>
    </source>
</evidence>
<evidence type="ECO:0000256" key="3">
    <source>
        <dbReference type="SAM" id="MobiDB-lite"/>
    </source>
</evidence>
<dbReference type="EC" id="6.3.2.4" evidence="2"/>
<dbReference type="EMBL" id="AP009493">
    <property type="protein sequence ID" value="BAG18750.1"/>
    <property type="molecule type" value="Genomic_DNA"/>
</dbReference>
<dbReference type="RefSeq" id="WP_003965994.1">
    <property type="nucleotide sequence ID" value="NC_010572.1"/>
</dbReference>
<dbReference type="SMR" id="B1VYZ5"/>
<dbReference type="KEGG" id="sgr:SGR_1921"/>
<dbReference type="eggNOG" id="COG1181">
    <property type="taxonomic scope" value="Bacteria"/>
</dbReference>
<dbReference type="HOGENOM" id="CLU_039268_0_0_11"/>
<dbReference type="UniPathway" id="UPA00219"/>
<dbReference type="Proteomes" id="UP000001685">
    <property type="component" value="Chromosome"/>
</dbReference>
<dbReference type="GO" id="GO:0005829">
    <property type="term" value="C:cytosol"/>
    <property type="evidence" value="ECO:0007669"/>
    <property type="project" value="TreeGrafter"/>
</dbReference>
<dbReference type="GO" id="GO:0005524">
    <property type="term" value="F:ATP binding"/>
    <property type="evidence" value="ECO:0007669"/>
    <property type="project" value="UniProtKB-KW"/>
</dbReference>
<dbReference type="GO" id="GO:0008716">
    <property type="term" value="F:D-alanine-D-alanine ligase activity"/>
    <property type="evidence" value="ECO:0007669"/>
    <property type="project" value="UniProtKB-UniRule"/>
</dbReference>
<dbReference type="GO" id="GO:0046872">
    <property type="term" value="F:metal ion binding"/>
    <property type="evidence" value="ECO:0007669"/>
    <property type="project" value="UniProtKB-KW"/>
</dbReference>
<dbReference type="GO" id="GO:0071555">
    <property type="term" value="P:cell wall organization"/>
    <property type="evidence" value="ECO:0007669"/>
    <property type="project" value="UniProtKB-KW"/>
</dbReference>
<dbReference type="GO" id="GO:0009252">
    <property type="term" value="P:peptidoglycan biosynthetic process"/>
    <property type="evidence" value="ECO:0007669"/>
    <property type="project" value="UniProtKB-UniRule"/>
</dbReference>
<dbReference type="GO" id="GO:0008360">
    <property type="term" value="P:regulation of cell shape"/>
    <property type="evidence" value="ECO:0007669"/>
    <property type="project" value="UniProtKB-KW"/>
</dbReference>
<dbReference type="FunFam" id="3.30.470.20:FF:000008">
    <property type="entry name" value="D-alanine--D-alanine ligase"/>
    <property type="match status" value="1"/>
</dbReference>
<dbReference type="Gene3D" id="3.40.50.20">
    <property type="match status" value="1"/>
</dbReference>
<dbReference type="Gene3D" id="3.30.1490.20">
    <property type="entry name" value="ATP-grasp fold, A domain"/>
    <property type="match status" value="1"/>
</dbReference>
<dbReference type="Gene3D" id="3.30.470.20">
    <property type="entry name" value="ATP-grasp fold, B domain"/>
    <property type="match status" value="1"/>
</dbReference>
<dbReference type="HAMAP" id="MF_00047">
    <property type="entry name" value="Dala_Dala_lig"/>
    <property type="match status" value="1"/>
</dbReference>
<dbReference type="InterPro" id="IPR011761">
    <property type="entry name" value="ATP-grasp"/>
</dbReference>
<dbReference type="InterPro" id="IPR013815">
    <property type="entry name" value="ATP_grasp_subdomain_1"/>
</dbReference>
<dbReference type="InterPro" id="IPR000291">
    <property type="entry name" value="D-Ala_lig_Van_CS"/>
</dbReference>
<dbReference type="InterPro" id="IPR005905">
    <property type="entry name" value="D_ala_D_ala"/>
</dbReference>
<dbReference type="InterPro" id="IPR011095">
    <property type="entry name" value="Dala_Dala_lig_C"/>
</dbReference>
<dbReference type="InterPro" id="IPR011127">
    <property type="entry name" value="Dala_Dala_lig_N"/>
</dbReference>
<dbReference type="InterPro" id="IPR016185">
    <property type="entry name" value="PreATP-grasp_dom_sf"/>
</dbReference>
<dbReference type="NCBIfam" id="TIGR01205">
    <property type="entry name" value="D_ala_D_alaTIGR"/>
    <property type="match status" value="1"/>
</dbReference>
<dbReference type="NCBIfam" id="NF002528">
    <property type="entry name" value="PRK01966.1-4"/>
    <property type="match status" value="1"/>
</dbReference>
<dbReference type="PANTHER" id="PTHR23132">
    <property type="entry name" value="D-ALANINE--D-ALANINE LIGASE"/>
    <property type="match status" value="1"/>
</dbReference>
<dbReference type="PANTHER" id="PTHR23132:SF25">
    <property type="entry name" value="D-ALANINE--D-ALANINE LIGASE A"/>
    <property type="match status" value="1"/>
</dbReference>
<dbReference type="Pfam" id="PF07478">
    <property type="entry name" value="Dala_Dala_lig_C"/>
    <property type="match status" value="1"/>
</dbReference>
<dbReference type="Pfam" id="PF01820">
    <property type="entry name" value="Dala_Dala_lig_N"/>
    <property type="match status" value="1"/>
</dbReference>
<dbReference type="PIRSF" id="PIRSF039102">
    <property type="entry name" value="Ddl/VanB"/>
    <property type="match status" value="1"/>
</dbReference>
<dbReference type="SUPFAM" id="SSF56059">
    <property type="entry name" value="Glutathione synthetase ATP-binding domain-like"/>
    <property type="match status" value="1"/>
</dbReference>
<dbReference type="SUPFAM" id="SSF52440">
    <property type="entry name" value="PreATP-grasp domain"/>
    <property type="match status" value="1"/>
</dbReference>
<dbReference type="PROSITE" id="PS50975">
    <property type="entry name" value="ATP_GRASP"/>
    <property type="match status" value="1"/>
</dbReference>
<dbReference type="PROSITE" id="PS00843">
    <property type="entry name" value="DALA_DALA_LIGASE_1"/>
    <property type="match status" value="1"/>
</dbReference>
<dbReference type="PROSITE" id="PS00844">
    <property type="entry name" value="DALA_DALA_LIGASE_2"/>
    <property type="match status" value="1"/>
</dbReference>